<organism>
    <name type="scientific">Oryza sativa subsp. indica</name>
    <name type="common">Rice</name>
    <dbReference type="NCBI Taxonomy" id="39946"/>
    <lineage>
        <taxon>Eukaryota</taxon>
        <taxon>Viridiplantae</taxon>
        <taxon>Streptophyta</taxon>
        <taxon>Embryophyta</taxon>
        <taxon>Tracheophyta</taxon>
        <taxon>Spermatophyta</taxon>
        <taxon>Magnoliopsida</taxon>
        <taxon>Liliopsida</taxon>
        <taxon>Poales</taxon>
        <taxon>Poaceae</taxon>
        <taxon>BOP clade</taxon>
        <taxon>Oryzoideae</taxon>
        <taxon>Oryzeae</taxon>
        <taxon>Oryzinae</taxon>
        <taxon>Oryza</taxon>
        <taxon>Oryza sativa</taxon>
    </lineage>
</organism>
<accession>A2YBX5</accession>
<accession>P47997</accession>
<accession>Q5Z583</accession>
<feature type="chain" id="PRO_0000300872" description="Protein kinase G11A">
    <location>
        <begin position="1"/>
        <end position="589"/>
    </location>
</feature>
<feature type="domain" description="Protein kinase" evidence="1">
    <location>
        <begin position="195"/>
        <end position="533"/>
    </location>
</feature>
<feature type="region of interest" description="Disordered" evidence="3">
    <location>
        <begin position="1"/>
        <end position="167"/>
    </location>
</feature>
<feature type="region of interest" description="Disordered" evidence="3">
    <location>
        <begin position="551"/>
        <end position="589"/>
    </location>
</feature>
<feature type="compositionally biased region" description="Polar residues" evidence="3">
    <location>
        <begin position="15"/>
        <end position="36"/>
    </location>
</feature>
<feature type="compositionally biased region" description="Polar residues" evidence="3">
    <location>
        <begin position="46"/>
        <end position="55"/>
    </location>
</feature>
<feature type="compositionally biased region" description="Polar residues" evidence="3">
    <location>
        <begin position="63"/>
        <end position="76"/>
    </location>
</feature>
<feature type="compositionally biased region" description="Basic and acidic residues" evidence="3">
    <location>
        <begin position="91"/>
        <end position="100"/>
    </location>
</feature>
<feature type="compositionally biased region" description="Low complexity" evidence="3">
    <location>
        <begin position="142"/>
        <end position="165"/>
    </location>
</feature>
<feature type="active site" description="Proton acceptor" evidence="1 2">
    <location>
        <position position="320"/>
    </location>
</feature>
<feature type="binding site" evidence="1">
    <location>
        <begin position="201"/>
        <end position="209"/>
    </location>
    <ligand>
        <name>ATP</name>
        <dbReference type="ChEBI" id="CHEBI:30616"/>
    </ligand>
</feature>
<feature type="binding site" evidence="1">
    <location>
        <position position="224"/>
    </location>
    <ligand>
        <name>ATP</name>
        <dbReference type="ChEBI" id="CHEBI:30616"/>
    </ligand>
</feature>
<feature type="sequence conflict" description="In Ref. 2; AAA33905." evidence="4" ref="2">
    <original>N</original>
    <variation>S</variation>
    <location>
        <position position="215"/>
    </location>
</feature>
<feature type="sequence conflict" description="In Ref. 2; AAA33905." evidence="4" ref="2">
    <original>K</original>
    <variation>E</variation>
    <location>
        <position position="218"/>
    </location>
</feature>
<proteinExistence type="evidence at transcript level"/>
<sequence>MASKAMPRAPPAAPNLQSLKLCSQNDSSLETTSPSKRSALVPGRSAESSKPNSEVVQKEQKSTQHQNESIDLTGSNDPAEVKAEGNLVPKRLADEEKGVVEDGIANGSLKSSSALGKEHGIASASGSARLVGRSETGERGFSSSRCRPSTSSDVSDESACSSISSVTKPHKANDSRWEAIQMIRTRDGILGLSHFKLLKKLGCGDIGSVYLSELNGTKSYFAMKVMDKASLASRKKLLRAQTEKEILQCLDHPFLPTLYTHFETDKFSCLVMEFCPGGDLHTLRQRQRGKYFPEQAVKFYVAEILLAMEYLHMLGIIYRDLKPENVLVREDGHIMLSDFDLSLRCAVSPTLIRSSNPDAEALRKNNQAYCVQPACVEPSCMIQPSCATPTTCFGPRFFSKSKKDRKPKPEVVNQVSPWPELIAEPSDARSMSFVGTHEYLAPEIIKGEGHGSAVDWWTFGIFLYELLFGKTPFKGSGNRATLFNVIGQPLRFPEYPVVSFSARDLIRGLLVKEPQQRLGCKRGATEIKQHPFFEGVNWALIRCASPPEVPRPVEIERPPKQPVSTSEPAAAPSDAAQKSSDSYLEFDFF</sequence>
<reference key="1">
    <citation type="journal article" date="2005" name="PLoS Biol.">
        <title>The genomes of Oryza sativa: a history of duplications.</title>
        <authorList>
            <person name="Yu J."/>
            <person name="Wang J."/>
            <person name="Lin W."/>
            <person name="Li S."/>
            <person name="Li H."/>
            <person name="Zhou J."/>
            <person name="Ni P."/>
            <person name="Dong W."/>
            <person name="Hu S."/>
            <person name="Zeng C."/>
            <person name="Zhang J."/>
            <person name="Zhang Y."/>
            <person name="Li R."/>
            <person name="Xu Z."/>
            <person name="Li S."/>
            <person name="Li X."/>
            <person name="Zheng H."/>
            <person name="Cong L."/>
            <person name="Lin L."/>
            <person name="Yin J."/>
            <person name="Geng J."/>
            <person name="Li G."/>
            <person name="Shi J."/>
            <person name="Liu J."/>
            <person name="Lv H."/>
            <person name="Li J."/>
            <person name="Wang J."/>
            <person name="Deng Y."/>
            <person name="Ran L."/>
            <person name="Shi X."/>
            <person name="Wang X."/>
            <person name="Wu Q."/>
            <person name="Li C."/>
            <person name="Ren X."/>
            <person name="Wang J."/>
            <person name="Wang X."/>
            <person name="Li D."/>
            <person name="Liu D."/>
            <person name="Zhang X."/>
            <person name="Ji Z."/>
            <person name="Zhao W."/>
            <person name="Sun Y."/>
            <person name="Zhang Z."/>
            <person name="Bao J."/>
            <person name="Han Y."/>
            <person name="Dong L."/>
            <person name="Ji J."/>
            <person name="Chen P."/>
            <person name="Wu S."/>
            <person name="Liu J."/>
            <person name="Xiao Y."/>
            <person name="Bu D."/>
            <person name="Tan J."/>
            <person name="Yang L."/>
            <person name="Ye C."/>
            <person name="Zhang J."/>
            <person name="Xu J."/>
            <person name="Zhou Y."/>
            <person name="Yu Y."/>
            <person name="Zhang B."/>
            <person name="Zhuang S."/>
            <person name="Wei H."/>
            <person name="Liu B."/>
            <person name="Lei M."/>
            <person name="Yu H."/>
            <person name="Li Y."/>
            <person name="Xu H."/>
            <person name="Wei S."/>
            <person name="He X."/>
            <person name="Fang L."/>
            <person name="Zhang Z."/>
            <person name="Zhang Y."/>
            <person name="Huang X."/>
            <person name="Su Z."/>
            <person name="Tong W."/>
            <person name="Li J."/>
            <person name="Tong Z."/>
            <person name="Li S."/>
            <person name="Ye J."/>
            <person name="Wang L."/>
            <person name="Fang L."/>
            <person name="Lei T."/>
            <person name="Chen C.-S."/>
            <person name="Chen H.-C."/>
            <person name="Xu Z."/>
            <person name="Li H."/>
            <person name="Huang H."/>
            <person name="Zhang F."/>
            <person name="Xu H."/>
            <person name="Li N."/>
            <person name="Zhao C."/>
            <person name="Li S."/>
            <person name="Dong L."/>
            <person name="Huang Y."/>
            <person name="Li L."/>
            <person name="Xi Y."/>
            <person name="Qi Q."/>
            <person name="Li W."/>
            <person name="Zhang B."/>
            <person name="Hu W."/>
            <person name="Zhang Y."/>
            <person name="Tian X."/>
            <person name="Jiao Y."/>
            <person name="Liang X."/>
            <person name="Jin J."/>
            <person name="Gao L."/>
            <person name="Zheng W."/>
            <person name="Hao B."/>
            <person name="Liu S.-M."/>
            <person name="Wang W."/>
            <person name="Yuan L."/>
            <person name="Cao M."/>
            <person name="McDermott J."/>
            <person name="Samudrala R."/>
            <person name="Wang J."/>
            <person name="Wong G.K.-S."/>
            <person name="Yang H."/>
        </authorList>
    </citation>
    <scope>NUCLEOTIDE SEQUENCE [LARGE SCALE GENOMIC DNA]</scope>
    <source>
        <strain>cv. 93-11</strain>
    </source>
</reference>
<reference key="2">
    <citation type="journal article" date="1989" name="Proc. Natl. Acad. Sci. U.S.A.">
        <title>Molecular cloning of plant transcripts encoding protein kinase homologs.</title>
        <authorList>
            <person name="Lawton M.A."/>
            <person name="Yamamoto R.T."/>
            <person name="Hanks S.K."/>
            <person name="Lamb C.J."/>
        </authorList>
    </citation>
    <scope>NUCLEOTIDE SEQUENCE [MRNA] OF 54-584</scope>
    <source>
        <strain>cv. IR36</strain>
        <tissue>Leaf</tissue>
    </source>
</reference>
<reference key="3">
    <citation type="journal article" date="1991" name="FEBS Lett.">
        <title>Diversity of the protein kinase gene family in rice.</title>
        <authorList>
            <person name="Feng X.H."/>
            <person name="Kung S.D."/>
        </authorList>
    </citation>
    <scope>NUCLEOTIDE SEQUENCE [MRNA] OF 327-434</scope>
    <source>
        <strain>cv. IR36</strain>
        <tissue>Seedling</tissue>
    </source>
</reference>
<dbReference type="EC" id="2.7.11.1"/>
<dbReference type="EMBL" id="CM000131">
    <property type="status" value="NOT_ANNOTATED_CDS"/>
    <property type="molecule type" value="Genomic_DNA"/>
</dbReference>
<dbReference type="EMBL" id="J04556">
    <property type="protein sequence ID" value="AAA33905.1"/>
    <property type="molecule type" value="mRNA"/>
</dbReference>
<dbReference type="PIR" id="B30311">
    <property type="entry name" value="B30311"/>
</dbReference>
<dbReference type="SMR" id="A2YBX5"/>
<dbReference type="Proteomes" id="UP000007015">
    <property type="component" value="Chromosome 6"/>
</dbReference>
<dbReference type="GO" id="GO:0005524">
    <property type="term" value="F:ATP binding"/>
    <property type="evidence" value="ECO:0007669"/>
    <property type="project" value="UniProtKB-KW"/>
</dbReference>
<dbReference type="GO" id="GO:0106310">
    <property type="term" value="F:protein serine kinase activity"/>
    <property type="evidence" value="ECO:0007669"/>
    <property type="project" value="RHEA"/>
</dbReference>
<dbReference type="GO" id="GO:0004674">
    <property type="term" value="F:protein serine/threonine kinase activity"/>
    <property type="evidence" value="ECO:0007669"/>
    <property type="project" value="UniProtKB-KW"/>
</dbReference>
<dbReference type="CDD" id="cd05574">
    <property type="entry name" value="STKc_phototropin_like"/>
    <property type="match status" value="1"/>
</dbReference>
<dbReference type="FunFam" id="3.30.200.20:FF:000032">
    <property type="entry name" value="Serine/threonine-protein kinase D6PK-like"/>
    <property type="match status" value="1"/>
</dbReference>
<dbReference type="FunFam" id="1.10.510.10:FF:000020">
    <property type="entry name" value="serine/threonine-protein kinase D6PK-like"/>
    <property type="match status" value="1"/>
</dbReference>
<dbReference type="FunFam" id="1.10.510.10:FF:000028">
    <property type="entry name" value="serine/threonine-protein kinase D6PK-like"/>
    <property type="match status" value="1"/>
</dbReference>
<dbReference type="Gene3D" id="3.30.200.20">
    <property type="entry name" value="Phosphorylase Kinase, domain 1"/>
    <property type="match status" value="1"/>
</dbReference>
<dbReference type="Gene3D" id="1.10.510.10">
    <property type="entry name" value="Transferase(Phosphotransferase) domain 1"/>
    <property type="match status" value="2"/>
</dbReference>
<dbReference type="InterPro" id="IPR011009">
    <property type="entry name" value="Kinase-like_dom_sf"/>
</dbReference>
<dbReference type="InterPro" id="IPR000719">
    <property type="entry name" value="Prot_kinase_dom"/>
</dbReference>
<dbReference type="InterPro" id="IPR008271">
    <property type="entry name" value="Ser/Thr_kinase_AS"/>
</dbReference>
<dbReference type="PANTHER" id="PTHR45637">
    <property type="entry name" value="FLIPPASE KINASE 1-RELATED"/>
    <property type="match status" value="1"/>
</dbReference>
<dbReference type="Pfam" id="PF00069">
    <property type="entry name" value="Pkinase"/>
    <property type="match status" value="2"/>
</dbReference>
<dbReference type="SMART" id="SM00220">
    <property type="entry name" value="S_TKc"/>
    <property type="match status" value="1"/>
</dbReference>
<dbReference type="SUPFAM" id="SSF56112">
    <property type="entry name" value="Protein kinase-like (PK-like)"/>
    <property type="match status" value="1"/>
</dbReference>
<dbReference type="PROSITE" id="PS50011">
    <property type="entry name" value="PROTEIN_KINASE_DOM"/>
    <property type="match status" value="1"/>
</dbReference>
<dbReference type="PROSITE" id="PS00108">
    <property type="entry name" value="PROTEIN_KINASE_ST"/>
    <property type="match status" value="1"/>
</dbReference>
<keyword id="KW-0067">ATP-binding</keyword>
<keyword id="KW-0418">Kinase</keyword>
<keyword id="KW-0547">Nucleotide-binding</keyword>
<keyword id="KW-1185">Reference proteome</keyword>
<keyword id="KW-0723">Serine/threonine-protein kinase</keyword>
<keyword id="KW-0808">Transferase</keyword>
<comment type="function">
    <text>May play a role in the regulation of metabolism and signal transduction processes.</text>
</comment>
<comment type="catalytic activity">
    <reaction>
        <text>L-seryl-[protein] + ATP = O-phospho-L-seryl-[protein] + ADP + H(+)</text>
        <dbReference type="Rhea" id="RHEA:17989"/>
        <dbReference type="Rhea" id="RHEA-COMP:9863"/>
        <dbReference type="Rhea" id="RHEA-COMP:11604"/>
        <dbReference type="ChEBI" id="CHEBI:15378"/>
        <dbReference type="ChEBI" id="CHEBI:29999"/>
        <dbReference type="ChEBI" id="CHEBI:30616"/>
        <dbReference type="ChEBI" id="CHEBI:83421"/>
        <dbReference type="ChEBI" id="CHEBI:456216"/>
        <dbReference type="EC" id="2.7.11.1"/>
    </reaction>
</comment>
<comment type="catalytic activity">
    <reaction>
        <text>L-threonyl-[protein] + ATP = O-phospho-L-threonyl-[protein] + ADP + H(+)</text>
        <dbReference type="Rhea" id="RHEA:46608"/>
        <dbReference type="Rhea" id="RHEA-COMP:11060"/>
        <dbReference type="Rhea" id="RHEA-COMP:11605"/>
        <dbReference type="ChEBI" id="CHEBI:15378"/>
        <dbReference type="ChEBI" id="CHEBI:30013"/>
        <dbReference type="ChEBI" id="CHEBI:30616"/>
        <dbReference type="ChEBI" id="CHEBI:61977"/>
        <dbReference type="ChEBI" id="CHEBI:456216"/>
        <dbReference type="EC" id="2.7.11.1"/>
    </reaction>
</comment>
<comment type="similarity">
    <text evidence="1">Belongs to the protein kinase superfamily. Ser/Thr protein kinase family.</text>
</comment>
<evidence type="ECO:0000255" key="1">
    <source>
        <dbReference type="PROSITE-ProRule" id="PRU00159"/>
    </source>
</evidence>
<evidence type="ECO:0000255" key="2">
    <source>
        <dbReference type="PROSITE-ProRule" id="PRU10027"/>
    </source>
</evidence>
<evidence type="ECO:0000256" key="3">
    <source>
        <dbReference type="SAM" id="MobiDB-lite"/>
    </source>
</evidence>
<evidence type="ECO:0000305" key="4"/>
<protein>
    <recommendedName>
        <fullName>Protein kinase G11A</fullName>
        <ecNumber>2.7.11.1</ecNumber>
    </recommendedName>
</protein>
<gene>
    <name type="ORF">OsI_021818</name>
</gene>
<name>G11A_ORYSI</name>